<protein>
    <recommendedName>
        <fullName evidence="1">Cell division protein ZapB</fullName>
    </recommendedName>
</protein>
<comment type="function">
    <text evidence="1">Non-essential, abundant cell division factor that is required for proper Z-ring formation. It is recruited early to the divisome by direct interaction with FtsZ, stimulating Z-ring assembly and thereby promoting cell division earlier in the cell cycle. Its recruitment to the Z-ring requires functional FtsA or ZipA.</text>
</comment>
<comment type="subunit">
    <text evidence="1">Homodimer. The ends of the coiled-coil dimer bind to each other, forming polymers. Interacts with FtsZ.</text>
</comment>
<comment type="subcellular location">
    <subcellularLocation>
        <location evidence="1">Cytoplasm</location>
    </subcellularLocation>
    <text evidence="1">Localizes to the septum at mid-cell, in a FtsZ-like pattern.</text>
</comment>
<comment type="similarity">
    <text evidence="1">Belongs to the ZapB family.</text>
</comment>
<accession>B7MI60</accession>
<gene>
    <name evidence="1" type="primary">zapB</name>
    <name type="ordered locus">ECS88_4378</name>
</gene>
<feature type="chain" id="PRO_1000138429" description="Cell division protein ZapB">
    <location>
        <begin position="1"/>
        <end position="81"/>
    </location>
</feature>
<feature type="region of interest" description="Disordered" evidence="2">
    <location>
        <begin position="36"/>
        <end position="67"/>
    </location>
</feature>
<feature type="coiled-coil region" evidence="1">
    <location>
        <begin position="5"/>
        <end position="81"/>
    </location>
</feature>
<feature type="compositionally biased region" description="Polar residues" evidence="2">
    <location>
        <begin position="37"/>
        <end position="47"/>
    </location>
</feature>
<feature type="compositionally biased region" description="Basic and acidic residues" evidence="2">
    <location>
        <begin position="48"/>
        <end position="62"/>
    </location>
</feature>
<feature type="modified residue" description="N6-acetyllysine" evidence="1">
    <location>
        <position position="10"/>
    </location>
</feature>
<keyword id="KW-0007">Acetylation</keyword>
<keyword id="KW-0131">Cell cycle</keyword>
<keyword id="KW-0132">Cell division</keyword>
<keyword id="KW-0175">Coiled coil</keyword>
<keyword id="KW-0963">Cytoplasm</keyword>
<keyword id="KW-1185">Reference proteome</keyword>
<keyword id="KW-0717">Septation</keyword>
<proteinExistence type="inferred from homology"/>
<organism>
    <name type="scientific">Escherichia coli O45:K1 (strain S88 / ExPEC)</name>
    <dbReference type="NCBI Taxonomy" id="585035"/>
    <lineage>
        <taxon>Bacteria</taxon>
        <taxon>Pseudomonadati</taxon>
        <taxon>Pseudomonadota</taxon>
        <taxon>Gammaproteobacteria</taxon>
        <taxon>Enterobacterales</taxon>
        <taxon>Enterobacteriaceae</taxon>
        <taxon>Escherichia</taxon>
    </lineage>
</organism>
<sequence>MTMSLEVFEKLEAKVQQAIDTITLLQMEIEELKEKNNSLSQEVQNAQHQREELERENNHLKEQQNGWQERLQALLGRMEEV</sequence>
<dbReference type="EMBL" id="CU928161">
    <property type="protein sequence ID" value="CAR05558.1"/>
    <property type="molecule type" value="Genomic_DNA"/>
</dbReference>
<dbReference type="RefSeq" id="WP_001296623.1">
    <property type="nucleotide sequence ID" value="NC_011742.1"/>
</dbReference>
<dbReference type="SMR" id="B7MI60"/>
<dbReference type="GeneID" id="93777970"/>
<dbReference type="KEGG" id="ecz:ECS88_4378"/>
<dbReference type="HOGENOM" id="CLU_171174_2_0_6"/>
<dbReference type="Proteomes" id="UP000000747">
    <property type="component" value="Chromosome"/>
</dbReference>
<dbReference type="GO" id="GO:0005737">
    <property type="term" value="C:cytoplasm"/>
    <property type="evidence" value="ECO:0007669"/>
    <property type="project" value="UniProtKB-SubCell"/>
</dbReference>
<dbReference type="GO" id="GO:0000917">
    <property type="term" value="P:division septum assembly"/>
    <property type="evidence" value="ECO:0007669"/>
    <property type="project" value="UniProtKB-KW"/>
</dbReference>
<dbReference type="GO" id="GO:0043093">
    <property type="term" value="P:FtsZ-dependent cytokinesis"/>
    <property type="evidence" value="ECO:0007669"/>
    <property type="project" value="UniProtKB-UniRule"/>
</dbReference>
<dbReference type="FunFam" id="1.20.5.340:FF:000014">
    <property type="entry name" value="Cell division protein ZapB"/>
    <property type="match status" value="1"/>
</dbReference>
<dbReference type="Gene3D" id="1.20.5.340">
    <property type="match status" value="1"/>
</dbReference>
<dbReference type="HAMAP" id="MF_01196">
    <property type="entry name" value="ZapB"/>
    <property type="match status" value="1"/>
</dbReference>
<dbReference type="InterPro" id="IPR009252">
    <property type="entry name" value="Cell_div_ZapB"/>
</dbReference>
<dbReference type="NCBIfam" id="NF011951">
    <property type="entry name" value="PRK15422.1"/>
    <property type="match status" value="1"/>
</dbReference>
<dbReference type="Pfam" id="PF06005">
    <property type="entry name" value="ZapB"/>
    <property type="match status" value="1"/>
</dbReference>
<evidence type="ECO:0000255" key="1">
    <source>
        <dbReference type="HAMAP-Rule" id="MF_01196"/>
    </source>
</evidence>
<evidence type="ECO:0000256" key="2">
    <source>
        <dbReference type="SAM" id="MobiDB-lite"/>
    </source>
</evidence>
<name>ZAPB_ECO45</name>
<reference key="1">
    <citation type="journal article" date="2009" name="PLoS Genet.">
        <title>Organised genome dynamics in the Escherichia coli species results in highly diverse adaptive paths.</title>
        <authorList>
            <person name="Touchon M."/>
            <person name="Hoede C."/>
            <person name="Tenaillon O."/>
            <person name="Barbe V."/>
            <person name="Baeriswyl S."/>
            <person name="Bidet P."/>
            <person name="Bingen E."/>
            <person name="Bonacorsi S."/>
            <person name="Bouchier C."/>
            <person name="Bouvet O."/>
            <person name="Calteau A."/>
            <person name="Chiapello H."/>
            <person name="Clermont O."/>
            <person name="Cruveiller S."/>
            <person name="Danchin A."/>
            <person name="Diard M."/>
            <person name="Dossat C."/>
            <person name="Karoui M.E."/>
            <person name="Frapy E."/>
            <person name="Garry L."/>
            <person name="Ghigo J.M."/>
            <person name="Gilles A.M."/>
            <person name="Johnson J."/>
            <person name="Le Bouguenec C."/>
            <person name="Lescat M."/>
            <person name="Mangenot S."/>
            <person name="Martinez-Jehanne V."/>
            <person name="Matic I."/>
            <person name="Nassif X."/>
            <person name="Oztas S."/>
            <person name="Petit M.A."/>
            <person name="Pichon C."/>
            <person name="Rouy Z."/>
            <person name="Ruf C.S."/>
            <person name="Schneider D."/>
            <person name="Tourret J."/>
            <person name="Vacherie B."/>
            <person name="Vallenet D."/>
            <person name="Medigue C."/>
            <person name="Rocha E.P.C."/>
            <person name="Denamur E."/>
        </authorList>
    </citation>
    <scope>NUCLEOTIDE SEQUENCE [LARGE SCALE GENOMIC DNA]</scope>
    <source>
        <strain>S88 / ExPEC</strain>
    </source>
</reference>